<comment type="function">
    <text evidence="1">Catalyzes the attachment of proline to tRNA(Pro) in a two-step reaction: proline is first activated by ATP to form Pro-AMP and then transferred to the acceptor end of tRNA(Pro). As ProRS can inadvertently accommodate and process non-cognate amino acids such as alanine and cysteine, to avoid such errors it has two additional distinct editing activities against alanine. One activity is designated as 'pretransfer' editing and involves the tRNA(Pro)-independent hydrolysis of activated Ala-AMP. The other activity is designated 'posttransfer' editing and involves deacylation of mischarged Ala-tRNA(Pro). The misacylated Cys-tRNA(Pro) is not edited by ProRS.</text>
</comment>
<comment type="catalytic activity">
    <reaction evidence="1">
        <text>tRNA(Pro) + L-proline + ATP = L-prolyl-tRNA(Pro) + AMP + diphosphate</text>
        <dbReference type="Rhea" id="RHEA:14305"/>
        <dbReference type="Rhea" id="RHEA-COMP:9700"/>
        <dbReference type="Rhea" id="RHEA-COMP:9702"/>
        <dbReference type="ChEBI" id="CHEBI:30616"/>
        <dbReference type="ChEBI" id="CHEBI:33019"/>
        <dbReference type="ChEBI" id="CHEBI:60039"/>
        <dbReference type="ChEBI" id="CHEBI:78442"/>
        <dbReference type="ChEBI" id="CHEBI:78532"/>
        <dbReference type="ChEBI" id="CHEBI:456215"/>
        <dbReference type="EC" id="6.1.1.15"/>
    </reaction>
</comment>
<comment type="subunit">
    <text evidence="1">Homodimer.</text>
</comment>
<comment type="subcellular location">
    <subcellularLocation>
        <location evidence="1">Cytoplasm</location>
    </subcellularLocation>
</comment>
<comment type="domain">
    <text evidence="1">Consists of three domains: the N-terminal catalytic domain, the editing domain and the C-terminal anticodon-binding domain.</text>
</comment>
<comment type="similarity">
    <text evidence="1">Belongs to the class-II aminoacyl-tRNA synthetase family. ProS type 1 subfamily.</text>
</comment>
<reference key="1">
    <citation type="submission" date="2007-07" db="EMBL/GenBank/DDBJ databases">
        <title>Genome sequence of Campylobacter curvus 525.92 isolated from human feces.</title>
        <authorList>
            <person name="Fouts D.E."/>
            <person name="Mongodin E.F."/>
            <person name="Puiu D."/>
            <person name="Sebastian Y."/>
            <person name="Miller W.G."/>
            <person name="Mandrell R.E."/>
            <person name="Lastovica A.J."/>
            <person name="Nelson K.E."/>
        </authorList>
    </citation>
    <scope>NUCLEOTIDE SEQUENCE [LARGE SCALE GENOMIC DNA]</scope>
    <source>
        <strain>525.92</strain>
    </source>
</reference>
<protein>
    <recommendedName>
        <fullName evidence="1">Proline--tRNA ligase</fullName>
        <ecNumber evidence="1">6.1.1.15</ecNumber>
    </recommendedName>
    <alternativeName>
        <fullName evidence="1">Prolyl-tRNA synthetase</fullName>
        <shortName evidence="1">ProRS</shortName>
    </alternativeName>
</protein>
<feature type="chain" id="PRO_1000069129" description="Proline--tRNA ligase">
    <location>
        <begin position="1"/>
        <end position="567"/>
    </location>
</feature>
<accession>A7GYU6</accession>
<sequence>MRFSKFYAPTTKEAPKDASLPSHIFLVRGGFVEQIGSGLYNFLPLGKMMLDKITKVVKEEMDAAGVLEVSFSVVTSGELWKQSGRFNVFGKELLRFKDRKENDFVLSPTNEEAAVALVRGKVTSYKQLPLNIYQINTKFRDEARPRFGLLRGREFTMKDAYSFHANEADMKREFDLMEATYSKIFTRLGLNFRAVEADSGAIGGSGSKEFMVLAKNGEDDILCCDSCKYAANVEAAKRAKKTSDAPAPQADATKFYTPDAKTIKAVAEFFKVDEFYTIKAVIKKAIYEDTQKIVAFFVRGNDELQETKAQNACGALELVDASEDEVAAAGLVAGFCGPVGLSGVDFYIDNELKGQTQMICGANEKDYHFVGVSVSSFNDERFKDLVSVQAGDICPKCGGKLELSKGIEVGHIFQLGYKYSSAMGATFLDENGKARPFLMGCYGIGVSRLIAVMVEASHDDRGCVWKKECTPFECEIVISNLKDEAGVKFATKLYENLRNLGLCVLLDDRNERFGVKMNDFELLGFPYAIIVGKGLENGEVELITRDGLVKEVVKKDEILSVLKEKLC</sequence>
<organism>
    <name type="scientific">Campylobacter curvus (strain 525.92)</name>
    <dbReference type="NCBI Taxonomy" id="360105"/>
    <lineage>
        <taxon>Bacteria</taxon>
        <taxon>Pseudomonadati</taxon>
        <taxon>Campylobacterota</taxon>
        <taxon>Epsilonproteobacteria</taxon>
        <taxon>Campylobacterales</taxon>
        <taxon>Campylobacteraceae</taxon>
        <taxon>Campylobacter</taxon>
    </lineage>
</organism>
<dbReference type="EC" id="6.1.1.15" evidence="1"/>
<dbReference type="EMBL" id="CP000767">
    <property type="protein sequence ID" value="EAT99950.1"/>
    <property type="molecule type" value="Genomic_DNA"/>
</dbReference>
<dbReference type="RefSeq" id="WP_011992376.1">
    <property type="nucleotide sequence ID" value="NC_009715.2"/>
</dbReference>
<dbReference type="SMR" id="A7GYU6"/>
<dbReference type="STRING" id="360105.CCV52592_0765"/>
<dbReference type="KEGG" id="ccv:CCV52592_0765"/>
<dbReference type="HOGENOM" id="CLU_016739_0_0_7"/>
<dbReference type="OrthoDB" id="9809052at2"/>
<dbReference type="Proteomes" id="UP000006380">
    <property type="component" value="Chromosome"/>
</dbReference>
<dbReference type="GO" id="GO:0005829">
    <property type="term" value="C:cytosol"/>
    <property type="evidence" value="ECO:0007669"/>
    <property type="project" value="TreeGrafter"/>
</dbReference>
<dbReference type="GO" id="GO:0002161">
    <property type="term" value="F:aminoacyl-tRNA deacylase activity"/>
    <property type="evidence" value="ECO:0007669"/>
    <property type="project" value="InterPro"/>
</dbReference>
<dbReference type="GO" id="GO:0005524">
    <property type="term" value="F:ATP binding"/>
    <property type="evidence" value="ECO:0007669"/>
    <property type="project" value="UniProtKB-UniRule"/>
</dbReference>
<dbReference type="GO" id="GO:0004827">
    <property type="term" value="F:proline-tRNA ligase activity"/>
    <property type="evidence" value="ECO:0007669"/>
    <property type="project" value="UniProtKB-UniRule"/>
</dbReference>
<dbReference type="GO" id="GO:0006433">
    <property type="term" value="P:prolyl-tRNA aminoacylation"/>
    <property type="evidence" value="ECO:0007669"/>
    <property type="project" value="UniProtKB-UniRule"/>
</dbReference>
<dbReference type="CDD" id="cd04334">
    <property type="entry name" value="ProRS-INS"/>
    <property type="match status" value="1"/>
</dbReference>
<dbReference type="CDD" id="cd00861">
    <property type="entry name" value="ProRS_anticodon_short"/>
    <property type="match status" value="1"/>
</dbReference>
<dbReference type="CDD" id="cd00779">
    <property type="entry name" value="ProRS_core_prok"/>
    <property type="match status" value="1"/>
</dbReference>
<dbReference type="FunFam" id="3.30.930.10:FF:000065">
    <property type="entry name" value="Proline--tRNA ligase"/>
    <property type="match status" value="1"/>
</dbReference>
<dbReference type="FunFam" id="3.30.930.10:FF:000066">
    <property type="entry name" value="Proline--tRNA ligase"/>
    <property type="match status" value="1"/>
</dbReference>
<dbReference type="Gene3D" id="3.40.50.800">
    <property type="entry name" value="Anticodon-binding domain"/>
    <property type="match status" value="1"/>
</dbReference>
<dbReference type="Gene3D" id="3.30.930.10">
    <property type="entry name" value="Bira Bifunctional Protein, Domain 2"/>
    <property type="match status" value="2"/>
</dbReference>
<dbReference type="HAMAP" id="MF_01569">
    <property type="entry name" value="Pro_tRNA_synth_type1"/>
    <property type="match status" value="1"/>
</dbReference>
<dbReference type="InterPro" id="IPR002314">
    <property type="entry name" value="aa-tRNA-synt_IIb"/>
</dbReference>
<dbReference type="InterPro" id="IPR006195">
    <property type="entry name" value="aa-tRNA-synth_II"/>
</dbReference>
<dbReference type="InterPro" id="IPR045864">
    <property type="entry name" value="aa-tRNA-synth_II/BPL/LPL"/>
</dbReference>
<dbReference type="InterPro" id="IPR004154">
    <property type="entry name" value="Anticodon-bd"/>
</dbReference>
<dbReference type="InterPro" id="IPR036621">
    <property type="entry name" value="Anticodon-bd_dom_sf"/>
</dbReference>
<dbReference type="InterPro" id="IPR002316">
    <property type="entry name" value="Pro-tRNA-ligase_IIa"/>
</dbReference>
<dbReference type="InterPro" id="IPR004500">
    <property type="entry name" value="Pro-tRNA-synth_IIa_bac-type"/>
</dbReference>
<dbReference type="InterPro" id="IPR023717">
    <property type="entry name" value="Pro-tRNA-Synthase_IIa_type1"/>
</dbReference>
<dbReference type="InterPro" id="IPR050062">
    <property type="entry name" value="Pro-tRNA_synthetase"/>
</dbReference>
<dbReference type="InterPro" id="IPR044140">
    <property type="entry name" value="ProRS_anticodon_short"/>
</dbReference>
<dbReference type="InterPro" id="IPR033730">
    <property type="entry name" value="ProRS_core_prok"/>
</dbReference>
<dbReference type="InterPro" id="IPR036754">
    <property type="entry name" value="YbaK/aa-tRNA-synt-asso_dom_sf"/>
</dbReference>
<dbReference type="InterPro" id="IPR007214">
    <property type="entry name" value="YbaK/aa-tRNA-synth-assoc-dom"/>
</dbReference>
<dbReference type="NCBIfam" id="NF006625">
    <property type="entry name" value="PRK09194.1"/>
    <property type="match status" value="1"/>
</dbReference>
<dbReference type="NCBIfam" id="TIGR00409">
    <property type="entry name" value="proS_fam_II"/>
    <property type="match status" value="1"/>
</dbReference>
<dbReference type="PANTHER" id="PTHR42753">
    <property type="entry name" value="MITOCHONDRIAL RIBOSOME PROTEIN L39/PROLYL-TRNA LIGASE FAMILY MEMBER"/>
    <property type="match status" value="1"/>
</dbReference>
<dbReference type="PANTHER" id="PTHR42753:SF2">
    <property type="entry name" value="PROLINE--TRNA LIGASE"/>
    <property type="match status" value="1"/>
</dbReference>
<dbReference type="Pfam" id="PF03129">
    <property type="entry name" value="HGTP_anticodon"/>
    <property type="match status" value="1"/>
</dbReference>
<dbReference type="Pfam" id="PF00587">
    <property type="entry name" value="tRNA-synt_2b"/>
    <property type="match status" value="1"/>
</dbReference>
<dbReference type="Pfam" id="PF04073">
    <property type="entry name" value="tRNA_edit"/>
    <property type="match status" value="1"/>
</dbReference>
<dbReference type="PRINTS" id="PR01046">
    <property type="entry name" value="TRNASYNTHPRO"/>
</dbReference>
<dbReference type="SUPFAM" id="SSF52954">
    <property type="entry name" value="Class II aaRS ABD-related"/>
    <property type="match status" value="1"/>
</dbReference>
<dbReference type="SUPFAM" id="SSF55681">
    <property type="entry name" value="Class II aaRS and biotin synthetases"/>
    <property type="match status" value="1"/>
</dbReference>
<dbReference type="SUPFAM" id="SSF55826">
    <property type="entry name" value="YbaK/ProRS associated domain"/>
    <property type="match status" value="1"/>
</dbReference>
<dbReference type="PROSITE" id="PS50862">
    <property type="entry name" value="AA_TRNA_LIGASE_II"/>
    <property type="match status" value="1"/>
</dbReference>
<name>SYP_CAMC5</name>
<keyword id="KW-0030">Aminoacyl-tRNA synthetase</keyword>
<keyword id="KW-0067">ATP-binding</keyword>
<keyword id="KW-0963">Cytoplasm</keyword>
<keyword id="KW-0436">Ligase</keyword>
<keyword id="KW-0547">Nucleotide-binding</keyword>
<keyword id="KW-0648">Protein biosynthesis</keyword>
<keyword id="KW-1185">Reference proteome</keyword>
<evidence type="ECO:0000255" key="1">
    <source>
        <dbReference type="HAMAP-Rule" id="MF_01569"/>
    </source>
</evidence>
<gene>
    <name evidence="1" type="primary">proS</name>
    <name type="ordered locus">Ccur92_10840</name>
    <name type="ORF">CCV52592_0765</name>
</gene>
<proteinExistence type="inferred from homology"/>